<name>RL28_BARBK</name>
<protein>
    <recommendedName>
        <fullName evidence="1">Large ribosomal subunit protein bL28</fullName>
    </recommendedName>
    <alternativeName>
        <fullName evidence="2">50S ribosomal protein L28</fullName>
    </alternativeName>
</protein>
<proteinExistence type="inferred from homology"/>
<evidence type="ECO:0000255" key="1">
    <source>
        <dbReference type="HAMAP-Rule" id="MF_00373"/>
    </source>
</evidence>
<evidence type="ECO:0000305" key="2"/>
<organism>
    <name type="scientific">Bartonella bacilliformis (strain ATCC 35685 / KC583 / Herrer 020/F12,63)</name>
    <dbReference type="NCBI Taxonomy" id="360095"/>
    <lineage>
        <taxon>Bacteria</taxon>
        <taxon>Pseudomonadati</taxon>
        <taxon>Pseudomonadota</taxon>
        <taxon>Alphaproteobacteria</taxon>
        <taxon>Hyphomicrobiales</taxon>
        <taxon>Bartonellaceae</taxon>
        <taxon>Bartonella</taxon>
    </lineage>
</organism>
<sequence length="98" mass="11114">MSRACELTGKTVQYGNNVSHANNKTRRRFLPNLCNVTLISEVMQQSYRLRISANAVRSVEHRGGLDNFLTKADDKELSQRARLLKRQIVKKKAEQAAA</sequence>
<feature type="chain" id="PRO_1000007174" description="Large ribosomal subunit protein bL28">
    <location>
        <begin position="1"/>
        <end position="98"/>
    </location>
</feature>
<accession>A1UR12</accession>
<gene>
    <name evidence="1" type="primary">rpmB</name>
    <name type="ordered locus">BARBAKC583_0077</name>
</gene>
<comment type="similarity">
    <text evidence="1">Belongs to the bacterial ribosomal protein bL28 family.</text>
</comment>
<keyword id="KW-0687">Ribonucleoprotein</keyword>
<keyword id="KW-0689">Ribosomal protein</keyword>
<reference key="1">
    <citation type="submission" date="2006-12" db="EMBL/GenBank/DDBJ databases">
        <authorList>
            <person name="Hendrix L."/>
            <person name="Mohamoud Y."/>
            <person name="Radune D."/>
            <person name="Shvartsbeyn A."/>
            <person name="Daugherty S."/>
            <person name="Dodson R."/>
            <person name="Durkin A.S."/>
            <person name="Harkins D."/>
            <person name="Huot H."/>
            <person name="Kothari S.P."/>
            <person name="Madupu R."/>
            <person name="Li J."/>
            <person name="Nelson W.C."/>
            <person name="Shrivastava S."/>
            <person name="Giglio M.G."/>
            <person name="Haft D."/>
            <person name="Selengut J."/>
            <person name="Fraser-Ligget C."/>
            <person name="Seshadri R."/>
        </authorList>
    </citation>
    <scope>NUCLEOTIDE SEQUENCE [LARGE SCALE GENOMIC DNA]</scope>
    <source>
        <strain>ATCC 35685 / KC583 / Herrer 020/F12,63</strain>
    </source>
</reference>
<dbReference type="EMBL" id="CP000524">
    <property type="protein sequence ID" value="ABM45210.1"/>
    <property type="molecule type" value="Genomic_DNA"/>
</dbReference>
<dbReference type="RefSeq" id="WP_005765816.1">
    <property type="nucleotide sequence ID" value="NC_008783.1"/>
</dbReference>
<dbReference type="SMR" id="A1UR12"/>
<dbReference type="STRING" id="360095.BARBAKC583_0077"/>
<dbReference type="GeneID" id="4684517"/>
<dbReference type="KEGG" id="bbk:BARBAKC583_0077"/>
<dbReference type="PATRIC" id="fig|360095.6.peg.77"/>
<dbReference type="eggNOG" id="COG0227">
    <property type="taxonomic scope" value="Bacteria"/>
</dbReference>
<dbReference type="HOGENOM" id="CLU_064548_4_2_5"/>
<dbReference type="OrthoDB" id="9805609at2"/>
<dbReference type="Proteomes" id="UP000000643">
    <property type="component" value="Chromosome"/>
</dbReference>
<dbReference type="GO" id="GO:0022625">
    <property type="term" value="C:cytosolic large ribosomal subunit"/>
    <property type="evidence" value="ECO:0007669"/>
    <property type="project" value="TreeGrafter"/>
</dbReference>
<dbReference type="GO" id="GO:0003735">
    <property type="term" value="F:structural constituent of ribosome"/>
    <property type="evidence" value="ECO:0007669"/>
    <property type="project" value="InterPro"/>
</dbReference>
<dbReference type="GO" id="GO:0006412">
    <property type="term" value="P:translation"/>
    <property type="evidence" value="ECO:0007669"/>
    <property type="project" value="UniProtKB-UniRule"/>
</dbReference>
<dbReference type="Gene3D" id="2.30.170.40">
    <property type="entry name" value="Ribosomal protein L28/L24"/>
    <property type="match status" value="1"/>
</dbReference>
<dbReference type="HAMAP" id="MF_00373">
    <property type="entry name" value="Ribosomal_bL28"/>
    <property type="match status" value="1"/>
</dbReference>
<dbReference type="InterPro" id="IPR026569">
    <property type="entry name" value="Ribosomal_bL28"/>
</dbReference>
<dbReference type="InterPro" id="IPR034704">
    <property type="entry name" value="Ribosomal_bL28/bL31-like_sf"/>
</dbReference>
<dbReference type="InterPro" id="IPR001383">
    <property type="entry name" value="Ribosomal_bL28_bact-type"/>
</dbReference>
<dbReference type="InterPro" id="IPR037147">
    <property type="entry name" value="Ribosomal_bL28_sf"/>
</dbReference>
<dbReference type="NCBIfam" id="TIGR00009">
    <property type="entry name" value="L28"/>
    <property type="match status" value="1"/>
</dbReference>
<dbReference type="PANTHER" id="PTHR13528">
    <property type="entry name" value="39S RIBOSOMAL PROTEIN L28, MITOCHONDRIAL"/>
    <property type="match status" value="1"/>
</dbReference>
<dbReference type="PANTHER" id="PTHR13528:SF2">
    <property type="entry name" value="LARGE RIBOSOMAL SUBUNIT PROTEIN BL28M"/>
    <property type="match status" value="1"/>
</dbReference>
<dbReference type="Pfam" id="PF00830">
    <property type="entry name" value="Ribosomal_L28"/>
    <property type="match status" value="1"/>
</dbReference>
<dbReference type="SUPFAM" id="SSF143800">
    <property type="entry name" value="L28p-like"/>
    <property type="match status" value="1"/>
</dbReference>